<organism>
    <name type="scientific">Bos taurus</name>
    <name type="common">Bovine</name>
    <dbReference type="NCBI Taxonomy" id="9913"/>
    <lineage>
        <taxon>Eukaryota</taxon>
        <taxon>Metazoa</taxon>
        <taxon>Chordata</taxon>
        <taxon>Craniata</taxon>
        <taxon>Vertebrata</taxon>
        <taxon>Euteleostomi</taxon>
        <taxon>Mammalia</taxon>
        <taxon>Eutheria</taxon>
        <taxon>Laurasiatheria</taxon>
        <taxon>Artiodactyla</taxon>
        <taxon>Ruminantia</taxon>
        <taxon>Pecora</taxon>
        <taxon>Bovidae</taxon>
        <taxon>Bovinae</taxon>
        <taxon>Bos</taxon>
    </lineage>
</organism>
<feature type="chain" id="PRO_0000244458" description="Regulator of G-protein signaling 4">
    <location>
        <begin position="1"/>
        <end position="205"/>
    </location>
</feature>
<feature type="domain" description="RGS" evidence="2">
    <location>
        <begin position="62"/>
        <end position="178"/>
    </location>
</feature>
<feature type="lipid moiety-binding region" description="S-palmitoyl cysteine" evidence="1">
    <location>
        <position position="2"/>
    </location>
</feature>
<feature type="lipid moiety-binding region" description="S-palmitoyl cysteine" evidence="1">
    <location>
        <position position="12"/>
    </location>
</feature>
<feature type="lipid moiety-binding region" description="S-palmitoyl cysteine" evidence="1">
    <location>
        <position position="95"/>
    </location>
</feature>
<evidence type="ECO:0000250" key="1"/>
<evidence type="ECO:0000255" key="2">
    <source>
        <dbReference type="PROSITE-ProRule" id="PRU00171"/>
    </source>
</evidence>
<proteinExistence type="evidence at transcript level"/>
<protein>
    <recommendedName>
        <fullName>Regulator of G-protein signaling 4</fullName>
        <shortName>RGS4</shortName>
    </recommendedName>
</protein>
<gene>
    <name type="primary">RGS4</name>
</gene>
<dbReference type="EMBL" id="BC114106">
    <property type="protein sequence ID" value="AAI14107.1"/>
    <property type="molecule type" value="mRNA"/>
</dbReference>
<dbReference type="RefSeq" id="NP_001040065.1">
    <property type="nucleotide sequence ID" value="NM_001046600.2"/>
</dbReference>
<dbReference type="SMR" id="Q29RM9"/>
<dbReference type="FunCoup" id="Q29RM9">
    <property type="interactions" value="101"/>
</dbReference>
<dbReference type="STRING" id="9913.ENSBTAP00000055609"/>
<dbReference type="PaxDb" id="9913-ENSBTAP00000055609"/>
<dbReference type="GeneID" id="617437"/>
<dbReference type="KEGG" id="bta:617437"/>
<dbReference type="CTD" id="5999"/>
<dbReference type="VEuPathDB" id="HostDB:ENSBTAG00000046277"/>
<dbReference type="eggNOG" id="KOG3589">
    <property type="taxonomic scope" value="Eukaryota"/>
</dbReference>
<dbReference type="HOGENOM" id="CLU_059863_3_0_1"/>
<dbReference type="InParanoid" id="Q29RM9"/>
<dbReference type="OMA" id="LIQDLCQ"/>
<dbReference type="OrthoDB" id="196547at2759"/>
<dbReference type="Reactome" id="R-BTA-416476">
    <property type="pathway name" value="G alpha (q) signalling events"/>
</dbReference>
<dbReference type="Reactome" id="R-BTA-418594">
    <property type="pathway name" value="G alpha (i) signalling events"/>
</dbReference>
<dbReference type="Proteomes" id="UP000009136">
    <property type="component" value="Chromosome 3"/>
</dbReference>
<dbReference type="Bgee" id="ENSBTAG00000046277">
    <property type="expression patterns" value="Expressed in occipital lobe and 80 other cell types or tissues"/>
</dbReference>
<dbReference type="GO" id="GO:0009968">
    <property type="term" value="P:negative regulation of signal transduction"/>
    <property type="evidence" value="ECO:0007669"/>
    <property type="project" value="UniProtKB-KW"/>
</dbReference>
<dbReference type="CDD" id="cd08714">
    <property type="entry name" value="RGS_RGS4"/>
    <property type="match status" value="1"/>
</dbReference>
<dbReference type="FunFam" id="1.10.167.10:FF:000001">
    <property type="entry name" value="Putative regulator of g-protein signaling 12"/>
    <property type="match status" value="1"/>
</dbReference>
<dbReference type="FunFam" id="1.10.196.10:FF:000001">
    <property type="entry name" value="Regulator of G-protein signaling 8"/>
    <property type="match status" value="1"/>
</dbReference>
<dbReference type="Gene3D" id="1.10.196.10">
    <property type="match status" value="1"/>
</dbReference>
<dbReference type="Gene3D" id="1.10.167.10">
    <property type="entry name" value="Regulator of G-protein Signalling 4, domain 2"/>
    <property type="match status" value="1"/>
</dbReference>
<dbReference type="InterPro" id="IPR016137">
    <property type="entry name" value="RGS"/>
</dbReference>
<dbReference type="InterPro" id="IPR034953">
    <property type="entry name" value="RGS_RGS4"/>
</dbReference>
<dbReference type="InterPro" id="IPR036305">
    <property type="entry name" value="RGS_sf"/>
</dbReference>
<dbReference type="InterPro" id="IPR024066">
    <property type="entry name" value="RGS_subdom1/3"/>
</dbReference>
<dbReference type="InterPro" id="IPR044926">
    <property type="entry name" value="RGS_subdomain_2"/>
</dbReference>
<dbReference type="PANTHER" id="PTHR10845">
    <property type="entry name" value="REGULATOR OF G PROTEIN SIGNALING"/>
    <property type="match status" value="1"/>
</dbReference>
<dbReference type="PANTHER" id="PTHR10845:SF184">
    <property type="entry name" value="REGULATOR OF G-PROTEIN SIGNALING 4"/>
    <property type="match status" value="1"/>
</dbReference>
<dbReference type="Pfam" id="PF00615">
    <property type="entry name" value="RGS"/>
    <property type="match status" value="1"/>
</dbReference>
<dbReference type="PRINTS" id="PR01301">
    <property type="entry name" value="RGSPROTEIN"/>
</dbReference>
<dbReference type="SMART" id="SM00315">
    <property type="entry name" value="RGS"/>
    <property type="match status" value="1"/>
</dbReference>
<dbReference type="SUPFAM" id="SSF48097">
    <property type="entry name" value="Regulator of G-protein signaling, RGS"/>
    <property type="match status" value="1"/>
</dbReference>
<dbReference type="PROSITE" id="PS50132">
    <property type="entry name" value="RGS"/>
    <property type="match status" value="1"/>
</dbReference>
<keyword id="KW-0449">Lipoprotein</keyword>
<keyword id="KW-0564">Palmitate</keyword>
<keyword id="KW-0597">Phosphoprotein</keyword>
<keyword id="KW-1185">Reference proteome</keyword>
<keyword id="KW-0734">Signal transduction inhibitor</keyword>
<comment type="function">
    <text evidence="1">Inhibits signal transduction by increasing the GTPase activity of G protein alpha subunits thereby driving them into their inactive GDP-bound form. Activity on G(z)-alpha is inhibited by phosphorylation of the G-protein. Activity on G(z)-alpha and G(i)-alpha-1 is inhibited by palmitoylation of the G-protein (By similarity).</text>
</comment>
<comment type="PTM">
    <text evidence="1">Palmitoylated on Cys-2 and/or Cys-12.</text>
</comment>
<comment type="PTM">
    <text evidence="1">Phosphorylated by cyclic GMP-dependent protein kinase.</text>
</comment>
<sequence length="205" mass="23328">MCKGLAGLPASCLRSAKDMKHRLGFLLQKSDSCEHNSSHSKKDKVVICQRVSHEEVKKWAESLENLISHECGLAAFKAFLKSEYSEENIDFWISCEEYKKIKSPSKLSPKAKKIYNEFISVQATKEVNLDSCTREETSRNMLEPTITCFDEAQRKIFNLMEKDSYRRFLKSRFYLDLVNLSSCGSEKQKGAKSSTDCASLVPQCA</sequence>
<name>RGS4_BOVIN</name>
<accession>Q29RM9</accession>
<reference key="1">
    <citation type="submission" date="2006-02" db="EMBL/GenBank/DDBJ databases">
        <authorList>
            <consortium name="NIH - Mammalian Gene Collection (MGC) project"/>
        </authorList>
    </citation>
    <scope>NUCLEOTIDE SEQUENCE [LARGE SCALE MRNA]</scope>
    <source>
        <strain>Hereford</strain>
        <tissue>Hypothalamus</tissue>
    </source>
</reference>